<comment type="subunit">
    <text evidence="1">Component of the mitochondrial ribosome small subunit (28S) which comprises a 12S rRNA and about 30 distinct proteins.</text>
</comment>
<comment type="subcellular location">
    <subcellularLocation>
        <location evidence="1">Mitochondrion</location>
    </subcellularLocation>
</comment>
<comment type="similarity">
    <text evidence="4">Belongs to the universal ribosomal protein uS15 family.</text>
</comment>
<name>RT15_DANRE</name>
<proteinExistence type="evidence at transcript level"/>
<gene>
    <name type="primary">mrps15</name>
    <name type="ORF">zgc:92862</name>
</gene>
<protein>
    <recommendedName>
        <fullName evidence="4">Small ribosomal subunit protein uS15m</fullName>
    </recommendedName>
    <alternativeName>
        <fullName>28S ribosomal protein S15, mitochondrial</fullName>
        <shortName>MRP-S15</shortName>
        <shortName>S15mt</shortName>
    </alternativeName>
</protein>
<organism>
    <name type="scientific">Danio rerio</name>
    <name type="common">Zebrafish</name>
    <name type="synonym">Brachydanio rerio</name>
    <dbReference type="NCBI Taxonomy" id="7955"/>
    <lineage>
        <taxon>Eukaryota</taxon>
        <taxon>Metazoa</taxon>
        <taxon>Chordata</taxon>
        <taxon>Craniata</taxon>
        <taxon>Vertebrata</taxon>
        <taxon>Euteleostomi</taxon>
        <taxon>Actinopterygii</taxon>
        <taxon>Neopterygii</taxon>
        <taxon>Teleostei</taxon>
        <taxon>Ostariophysi</taxon>
        <taxon>Cypriniformes</taxon>
        <taxon>Danionidae</taxon>
        <taxon>Danioninae</taxon>
        <taxon>Danio</taxon>
    </lineage>
</organism>
<keyword id="KW-0496">Mitochondrion</keyword>
<keyword id="KW-1185">Reference proteome</keyword>
<keyword id="KW-0687">Ribonucleoprotein</keyword>
<keyword id="KW-0689">Ribosomal protein</keyword>
<keyword id="KW-0809">Transit peptide</keyword>
<dbReference type="EMBL" id="BC076324">
    <property type="protein sequence ID" value="AAH76324.1"/>
    <property type="molecule type" value="mRNA"/>
</dbReference>
<dbReference type="RefSeq" id="NP_001002485.1">
    <property type="nucleotide sequence ID" value="NM_001002485.2"/>
</dbReference>
<dbReference type="SMR" id="Q6DGL8"/>
<dbReference type="FunCoup" id="Q6DGL8">
    <property type="interactions" value="867"/>
</dbReference>
<dbReference type="STRING" id="7955.ENSDARP00000147803"/>
<dbReference type="PaxDb" id="7955-ENSDARP00000110881"/>
<dbReference type="Ensembl" id="ENSDART00000190427">
    <property type="protein sequence ID" value="ENSDARP00000147803"/>
    <property type="gene ID" value="ENSDARG00000109289"/>
</dbReference>
<dbReference type="GeneID" id="436758"/>
<dbReference type="KEGG" id="dre:436758"/>
<dbReference type="AGR" id="ZFIN:ZDB-GENE-040718-188"/>
<dbReference type="CTD" id="64960"/>
<dbReference type="ZFIN" id="ZDB-GENE-040718-188">
    <property type="gene designation" value="mrps15"/>
</dbReference>
<dbReference type="eggNOG" id="KOG2815">
    <property type="taxonomic scope" value="Eukaryota"/>
</dbReference>
<dbReference type="HOGENOM" id="CLU_094627_1_0_1"/>
<dbReference type="InParanoid" id="Q6DGL8"/>
<dbReference type="OMA" id="EHLHMHP"/>
<dbReference type="OrthoDB" id="441444at2759"/>
<dbReference type="PhylomeDB" id="Q6DGL8"/>
<dbReference type="TreeFam" id="TF319038"/>
<dbReference type="Reactome" id="R-DRE-5389840">
    <property type="pathway name" value="Mitochondrial translation elongation"/>
</dbReference>
<dbReference type="Reactome" id="R-DRE-5419276">
    <property type="pathway name" value="Mitochondrial translation termination"/>
</dbReference>
<dbReference type="PRO" id="PR:Q6DGL8"/>
<dbReference type="Proteomes" id="UP000000437">
    <property type="component" value="Chromosome 16"/>
</dbReference>
<dbReference type="Bgee" id="ENSDARG00000109289">
    <property type="expression patterns" value="Expressed in cardiac ventricle and 25 other cell types or tissues"/>
</dbReference>
<dbReference type="GO" id="GO:0005763">
    <property type="term" value="C:mitochondrial small ribosomal subunit"/>
    <property type="evidence" value="ECO:0000250"/>
    <property type="project" value="UniProtKB"/>
</dbReference>
<dbReference type="GO" id="GO:0003735">
    <property type="term" value="F:structural constituent of ribosome"/>
    <property type="evidence" value="ECO:0007669"/>
    <property type="project" value="InterPro"/>
</dbReference>
<dbReference type="GO" id="GO:0006412">
    <property type="term" value="P:translation"/>
    <property type="evidence" value="ECO:0007669"/>
    <property type="project" value="InterPro"/>
</dbReference>
<dbReference type="CDD" id="cd00353">
    <property type="entry name" value="Ribosomal_S15p_S13e"/>
    <property type="match status" value="1"/>
</dbReference>
<dbReference type="FunFam" id="1.10.287.10:FF:000015">
    <property type="entry name" value="Mitochondrial ribosomal protein S15"/>
    <property type="match status" value="1"/>
</dbReference>
<dbReference type="Gene3D" id="1.10.287.10">
    <property type="entry name" value="S15/NS1, RNA-binding"/>
    <property type="match status" value="1"/>
</dbReference>
<dbReference type="HAMAP" id="MF_01343_B">
    <property type="entry name" value="Ribosomal_uS15_B"/>
    <property type="match status" value="1"/>
</dbReference>
<dbReference type="InterPro" id="IPR000589">
    <property type="entry name" value="Ribosomal_uS15"/>
</dbReference>
<dbReference type="InterPro" id="IPR005290">
    <property type="entry name" value="Ribosomal_uS15_bac-type"/>
</dbReference>
<dbReference type="InterPro" id="IPR009068">
    <property type="entry name" value="uS15_NS1_RNA-bd_sf"/>
</dbReference>
<dbReference type="InterPro" id="IPR052137">
    <property type="entry name" value="uS15_ribosomal"/>
</dbReference>
<dbReference type="NCBIfam" id="TIGR00952">
    <property type="entry name" value="S15_bact"/>
    <property type="match status" value="1"/>
</dbReference>
<dbReference type="PANTHER" id="PTHR46685">
    <property type="entry name" value="28S RIBOSOMAL PROTEIN S15, MITOCHONDRIAL"/>
    <property type="match status" value="1"/>
</dbReference>
<dbReference type="PANTHER" id="PTHR46685:SF1">
    <property type="entry name" value="SMALL RIBOSOMAL SUBUNIT PROTEIN US15M"/>
    <property type="match status" value="1"/>
</dbReference>
<dbReference type="Pfam" id="PF00312">
    <property type="entry name" value="Ribosomal_S15"/>
    <property type="match status" value="1"/>
</dbReference>
<dbReference type="SMART" id="SM01387">
    <property type="entry name" value="Ribosomal_S15"/>
    <property type="match status" value="1"/>
</dbReference>
<dbReference type="SUPFAM" id="SSF47060">
    <property type="entry name" value="S15/NS1 RNA-binding domain"/>
    <property type="match status" value="1"/>
</dbReference>
<sequence>MVLKSVFRSTVLGLRTWSVFSVARQSKTTLPAFSQAQCSSYTNWTFSRHFKGDETLLNQPVRQYARPSRKKQEFPSQLEDLKTSMLKHEYASVPLAQSVDDVVKKLLTLEFANHSEKLRLKEEQLIAKVQRDENDRSSTEVKVAILTARIRNFQEHLHKHPKDKANKRWMLMTIDKRKKLLKFLRRTRYDSFEKVCKELGITYTFPPEYYRRVTRRWLAKKAFCNKVFKEVQRLKAAEREKQKAEEAERKKSSSSTNPQETAA</sequence>
<reference key="1">
    <citation type="submission" date="2004-07" db="EMBL/GenBank/DDBJ databases">
        <authorList>
            <consortium name="NIH - Zebrafish Gene Collection (ZGC) project"/>
        </authorList>
    </citation>
    <scope>NUCLEOTIDE SEQUENCE [LARGE SCALE MRNA]</scope>
    <source>
        <tissue>Brain</tissue>
    </source>
</reference>
<evidence type="ECO:0000250" key="1">
    <source>
        <dbReference type="UniProtKB" id="P82913"/>
    </source>
</evidence>
<evidence type="ECO:0000255" key="2"/>
<evidence type="ECO:0000256" key="3">
    <source>
        <dbReference type="SAM" id="MobiDB-lite"/>
    </source>
</evidence>
<evidence type="ECO:0000305" key="4"/>
<feature type="transit peptide" description="Mitochondrion" evidence="2">
    <location>
        <begin position="1"/>
        <end position="70"/>
    </location>
</feature>
<feature type="chain" id="PRO_0000384429" description="Small ribosomal subunit protein uS15m">
    <location>
        <begin position="71"/>
        <end position="263"/>
    </location>
</feature>
<feature type="region of interest" description="Disordered" evidence="3">
    <location>
        <begin position="238"/>
        <end position="263"/>
    </location>
</feature>
<feature type="compositionally biased region" description="Basic and acidic residues" evidence="3">
    <location>
        <begin position="238"/>
        <end position="251"/>
    </location>
</feature>
<accession>Q6DGL8</accession>